<keyword id="KW-0025">Alternative splicing</keyword>
<keyword id="KW-0040">ANK repeat</keyword>
<keyword id="KW-0472">Membrane</keyword>
<keyword id="KW-1185">Reference proteome</keyword>
<keyword id="KW-0677">Repeat</keyword>
<keyword id="KW-0812">Transmembrane</keyword>
<keyword id="KW-1133">Transmembrane helix</keyword>
<proteinExistence type="inferred from homology"/>
<organism>
    <name type="scientific">Danio rerio</name>
    <name type="common">Zebrafish</name>
    <name type="synonym">Brachydanio rerio</name>
    <dbReference type="NCBI Taxonomy" id="7955"/>
    <lineage>
        <taxon>Eukaryota</taxon>
        <taxon>Metazoa</taxon>
        <taxon>Chordata</taxon>
        <taxon>Craniata</taxon>
        <taxon>Vertebrata</taxon>
        <taxon>Euteleostomi</taxon>
        <taxon>Actinopterygii</taxon>
        <taxon>Neopterygii</taxon>
        <taxon>Teleostei</taxon>
        <taxon>Ostariophysi</taxon>
        <taxon>Cypriniformes</taxon>
        <taxon>Danionidae</taxon>
        <taxon>Danioninae</taxon>
        <taxon>Danio</taxon>
    </lineage>
</organism>
<evidence type="ECO:0000255" key="1"/>
<evidence type="ECO:0000255" key="2">
    <source>
        <dbReference type="PROSITE-ProRule" id="PRU00037"/>
    </source>
</evidence>
<evidence type="ECO:0000305" key="3"/>
<feature type="chain" id="PRO_0000367030" description="Ankyrin repeat- and BTB/POZ domain-containing protein 3-A">
    <location>
        <begin position="1"/>
        <end position="1021"/>
    </location>
</feature>
<feature type="transmembrane region" description="Helical" evidence="1">
    <location>
        <begin position="160"/>
        <end position="180"/>
    </location>
</feature>
<feature type="repeat" description="ANK 1" evidence="1">
    <location>
        <begin position="515"/>
        <end position="544"/>
    </location>
</feature>
<feature type="repeat" description="ANK 2" evidence="1">
    <location>
        <begin position="561"/>
        <end position="590"/>
    </location>
</feature>
<feature type="repeat" description="ANK 3" evidence="1">
    <location>
        <begin position="599"/>
        <end position="628"/>
    </location>
</feature>
<feature type="repeat" description="ANK 4" evidence="1">
    <location>
        <begin position="642"/>
        <end position="671"/>
    </location>
</feature>
<feature type="domain" description="BTB" evidence="2">
    <location>
        <begin position="836"/>
        <end position="902"/>
    </location>
</feature>
<feature type="splice variant" id="VSP_053045" description="In isoform 2." evidence="3">
    <location>
        <begin position="1"/>
        <end position="338"/>
    </location>
</feature>
<feature type="splice variant" id="VSP_053046" description="In isoform 2." evidence="3">
    <original>L</original>
    <variation>MPIARLNSAPLNSHFWRPVWGASPSSV</variation>
    <location>
        <position position="339"/>
    </location>
</feature>
<gene>
    <name type="primary">abtb3a</name>
    <name type="synonym">btbd11a</name>
    <name type="ORF">si:ch211-133h2.1</name>
    <name type="ORF">si:ch211-161f1.1</name>
</gene>
<name>ABT3A_DANRE</name>
<protein>
    <recommendedName>
        <fullName>Ankyrin repeat- and BTB/POZ domain-containing protein 3-A</fullName>
    </recommendedName>
    <alternativeName>
        <fullName>BTB/POZ domain-containing protein 11-A</fullName>
    </alternativeName>
</protein>
<reference key="1">
    <citation type="journal article" date="2013" name="Nature">
        <title>The zebrafish reference genome sequence and its relationship to the human genome.</title>
        <authorList>
            <person name="Howe K."/>
            <person name="Clark M.D."/>
            <person name="Torroja C.F."/>
            <person name="Torrance J."/>
            <person name="Berthelot C."/>
            <person name="Muffato M."/>
            <person name="Collins J.E."/>
            <person name="Humphray S."/>
            <person name="McLaren K."/>
            <person name="Matthews L."/>
            <person name="McLaren S."/>
            <person name="Sealy I."/>
            <person name="Caccamo M."/>
            <person name="Churcher C."/>
            <person name="Scott C."/>
            <person name="Barrett J.C."/>
            <person name="Koch R."/>
            <person name="Rauch G.J."/>
            <person name="White S."/>
            <person name="Chow W."/>
            <person name="Kilian B."/>
            <person name="Quintais L.T."/>
            <person name="Guerra-Assuncao J.A."/>
            <person name="Zhou Y."/>
            <person name="Gu Y."/>
            <person name="Yen J."/>
            <person name="Vogel J.H."/>
            <person name="Eyre T."/>
            <person name="Redmond S."/>
            <person name="Banerjee R."/>
            <person name="Chi J."/>
            <person name="Fu B."/>
            <person name="Langley E."/>
            <person name="Maguire S.F."/>
            <person name="Laird G.K."/>
            <person name="Lloyd D."/>
            <person name="Kenyon E."/>
            <person name="Donaldson S."/>
            <person name="Sehra H."/>
            <person name="Almeida-King J."/>
            <person name="Loveland J."/>
            <person name="Trevanion S."/>
            <person name="Jones M."/>
            <person name="Quail M."/>
            <person name="Willey D."/>
            <person name="Hunt A."/>
            <person name="Burton J."/>
            <person name="Sims S."/>
            <person name="McLay K."/>
            <person name="Plumb B."/>
            <person name="Davis J."/>
            <person name="Clee C."/>
            <person name="Oliver K."/>
            <person name="Clark R."/>
            <person name="Riddle C."/>
            <person name="Elliot D."/>
            <person name="Threadgold G."/>
            <person name="Harden G."/>
            <person name="Ware D."/>
            <person name="Begum S."/>
            <person name="Mortimore B."/>
            <person name="Kerry G."/>
            <person name="Heath P."/>
            <person name="Phillimore B."/>
            <person name="Tracey A."/>
            <person name="Corby N."/>
            <person name="Dunn M."/>
            <person name="Johnson C."/>
            <person name="Wood J."/>
            <person name="Clark S."/>
            <person name="Pelan S."/>
            <person name="Griffiths G."/>
            <person name="Smith M."/>
            <person name="Glithero R."/>
            <person name="Howden P."/>
            <person name="Barker N."/>
            <person name="Lloyd C."/>
            <person name="Stevens C."/>
            <person name="Harley J."/>
            <person name="Holt K."/>
            <person name="Panagiotidis G."/>
            <person name="Lovell J."/>
            <person name="Beasley H."/>
            <person name="Henderson C."/>
            <person name="Gordon D."/>
            <person name="Auger K."/>
            <person name="Wright D."/>
            <person name="Collins J."/>
            <person name="Raisen C."/>
            <person name="Dyer L."/>
            <person name="Leung K."/>
            <person name="Robertson L."/>
            <person name="Ambridge K."/>
            <person name="Leongamornlert D."/>
            <person name="McGuire S."/>
            <person name="Gilderthorp R."/>
            <person name="Griffiths C."/>
            <person name="Manthravadi D."/>
            <person name="Nichol S."/>
            <person name="Barker G."/>
            <person name="Whitehead S."/>
            <person name="Kay M."/>
            <person name="Brown J."/>
            <person name="Murnane C."/>
            <person name="Gray E."/>
            <person name="Humphries M."/>
            <person name="Sycamore N."/>
            <person name="Barker D."/>
            <person name="Saunders D."/>
            <person name="Wallis J."/>
            <person name="Babbage A."/>
            <person name="Hammond S."/>
            <person name="Mashreghi-Mohammadi M."/>
            <person name="Barr L."/>
            <person name="Martin S."/>
            <person name="Wray P."/>
            <person name="Ellington A."/>
            <person name="Matthews N."/>
            <person name="Ellwood M."/>
            <person name="Woodmansey R."/>
            <person name="Clark G."/>
            <person name="Cooper J."/>
            <person name="Tromans A."/>
            <person name="Grafham D."/>
            <person name="Skuce C."/>
            <person name="Pandian R."/>
            <person name="Andrews R."/>
            <person name="Harrison E."/>
            <person name="Kimberley A."/>
            <person name="Garnett J."/>
            <person name="Fosker N."/>
            <person name="Hall R."/>
            <person name="Garner P."/>
            <person name="Kelly D."/>
            <person name="Bird C."/>
            <person name="Palmer S."/>
            <person name="Gehring I."/>
            <person name="Berger A."/>
            <person name="Dooley C.M."/>
            <person name="Ersan-Urun Z."/>
            <person name="Eser C."/>
            <person name="Geiger H."/>
            <person name="Geisler M."/>
            <person name="Karotki L."/>
            <person name="Kirn A."/>
            <person name="Konantz J."/>
            <person name="Konantz M."/>
            <person name="Oberlander M."/>
            <person name="Rudolph-Geiger S."/>
            <person name="Teucke M."/>
            <person name="Lanz C."/>
            <person name="Raddatz G."/>
            <person name="Osoegawa K."/>
            <person name="Zhu B."/>
            <person name="Rapp A."/>
            <person name="Widaa S."/>
            <person name="Langford C."/>
            <person name="Yang F."/>
            <person name="Schuster S.C."/>
            <person name="Carter N.P."/>
            <person name="Harrow J."/>
            <person name="Ning Z."/>
            <person name="Herrero J."/>
            <person name="Searle S.M."/>
            <person name="Enright A."/>
            <person name="Geisler R."/>
            <person name="Plasterk R.H."/>
            <person name="Lee C."/>
            <person name="Westerfield M."/>
            <person name="de Jong P.J."/>
            <person name="Zon L.I."/>
            <person name="Postlethwait J.H."/>
            <person name="Nusslein-Volhard C."/>
            <person name="Hubbard T.J."/>
            <person name="Roest Crollius H."/>
            <person name="Rogers J."/>
            <person name="Stemple D.L."/>
        </authorList>
    </citation>
    <scope>NUCLEOTIDE SEQUENCE [LARGE SCALE GENOMIC DNA]</scope>
    <source>
        <strain>Tuebingen</strain>
    </source>
</reference>
<accession>Q1LVW0</accession>
<accession>Q1MTD0</accession>
<sequence length="1021" mass="113811">MAGKGKTAARTLEDLTLDSGYGGAADSFRSSSVSLCCSDTHLSYAHGGNCWHLTESMHSRHNSLDTVNTVLAEDTEILECSGQCAKLPELEEDVPWSLGEVEGALRKDEELCVGNASREILAKLSALVSRALVRIAREAQRMSLRYARCTKHEIQSAIKMVLSWTISVNCITAALSALSLYNMSTGDKFSRGKSTRCGLIFSVGKFFRWMVDSRVALRIHEHAAIYLSACMESLFREVFTRVQRSALVEKENGVPKFSVESLEQAINNDSELWGLLQPYQHLICGKNASGVLSLPDSLNLHRDQQRAGKTGEGHAYSQAELRTIEQSLLATRVGSIAELSDLVSRAMHHLQPLHIKNPSNGTPVHQNRTGSVHWEPEALYTLCYFMHCPQMEWENPNVEPSKITLHTERPFLVLPPLMEWIRVAVAHTEHRRSFSVDSDDVRQAARLLLPGVDCEPRQLKADDCFCATRKLDAASTEAKFLQDLGFRMLNCGRTDLVKQAVNLLGPDGINSMSEQGMTPLMYSCVRGDEAMVQMLLDAGADINSEVPSSLHKHPSVYPDTRQGTPLTFAVLHGHVPVVQLLLDARANVEGAIQESTENYTETPLQLASAAGNFELVSLLLERGADPLIGTTYRNGISSGPLGEMNSYSLAAAHGHRNVFRKLLSQVEKDKGDVLSLEEMLAEGSEAVERRAPQNEGTLRTGKAKLRALREAMYHSAEHGHVDITIDIRSLGVPWTLHTWLESLRTCFVQQRRPLIQGLLKDFSCIKEDEYTEELITHGLPLMFQILRASKNEVISQQLSVIFTQCYGPFPIPKLTEIKKKQTSRLDPHFLNNKEMSDVTFLVEGKPFYAHKVLLFTASPRFKSLLSNRPAAENTCIEISHVKYNIFQLVMQYLYCGGTESLHIRNTEIMELLSAAKFFQLDALQRHCEIICSKNITNDSCVDIYKHARFLGALELAGFIEGFFLKNMVLLIELENFKQLLYEVPADSPGPGPSYDVLHDLEQTLALRIRSIHLSTSKGSIV</sequence>
<comment type="subcellular location">
    <subcellularLocation>
        <location evidence="1">Membrane</location>
        <topology evidence="1">Single-pass membrane protein</topology>
    </subcellularLocation>
</comment>
<comment type="alternative products">
    <event type="alternative splicing"/>
    <isoform>
        <id>Q1LVW0-1</id>
        <name>1</name>
        <sequence type="displayed"/>
    </isoform>
    <isoform>
        <id>Q1LVW0-2</id>
        <name>2</name>
        <sequence type="described" ref="VSP_053045 VSP_053046"/>
    </isoform>
</comment>
<dbReference type="EMBL" id="AL928936">
    <property type="protein sequence ID" value="CAK04094.1"/>
    <property type="molecule type" value="Genomic_DNA"/>
</dbReference>
<dbReference type="EMBL" id="BX005210">
    <property type="status" value="NOT_ANNOTATED_CDS"/>
    <property type="molecule type" value="Genomic_DNA"/>
</dbReference>
<dbReference type="EMBL" id="BX649350">
    <property type="protein sequence ID" value="CAK04216.1"/>
    <property type="molecule type" value="Genomic_DNA"/>
</dbReference>
<dbReference type="RefSeq" id="NP_001038467.1">
    <property type="nucleotide sequence ID" value="NM_001045002.1"/>
</dbReference>
<dbReference type="RefSeq" id="NP_001314771.1">
    <molecule id="Q1LVW0-1"/>
    <property type="nucleotide sequence ID" value="NM_001327842.1"/>
</dbReference>
<dbReference type="RefSeq" id="XP_009298436.1">
    <property type="nucleotide sequence ID" value="XM_009300161.1"/>
</dbReference>
<dbReference type="SMR" id="Q1LVW0"/>
<dbReference type="FunCoup" id="Q1LVW0">
    <property type="interactions" value="303"/>
</dbReference>
<dbReference type="PaxDb" id="7955-ENSDARP00000086682"/>
<dbReference type="Ensembl" id="ENSDART00000092250">
    <molecule id="Q1LVW0-1"/>
    <property type="protein sequence ID" value="ENSDARP00000086682"/>
    <property type="gene ID" value="ENSDARG00000063255"/>
</dbReference>
<dbReference type="GeneID" id="562893"/>
<dbReference type="KEGG" id="dre:562893"/>
<dbReference type="AGR" id="ZFIN:ZDB-GENE-050419-142"/>
<dbReference type="CTD" id="562893"/>
<dbReference type="ZFIN" id="ZDB-GENE-050419-142">
    <property type="gene designation" value="btbd11a"/>
</dbReference>
<dbReference type="eggNOG" id="ENOG502QSQY">
    <property type="taxonomic scope" value="Eukaryota"/>
</dbReference>
<dbReference type="HOGENOM" id="CLU_001918_0_0_1"/>
<dbReference type="InParanoid" id="Q1LVW0"/>
<dbReference type="OMA" id="NLHREPQ"/>
<dbReference type="OrthoDB" id="2316821at2759"/>
<dbReference type="PhylomeDB" id="Q1LVW0"/>
<dbReference type="TreeFam" id="TF106437"/>
<dbReference type="PRO" id="PR:Q1LVW0"/>
<dbReference type="Proteomes" id="UP000000437">
    <property type="component" value="Chromosome 4"/>
</dbReference>
<dbReference type="Bgee" id="ENSDARG00000063255">
    <property type="expression patterns" value="Expressed in brain and 11 other cell types or tissues"/>
</dbReference>
<dbReference type="GO" id="GO:0016020">
    <property type="term" value="C:membrane"/>
    <property type="evidence" value="ECO:0007669"/>
    <property type="project" value="UniProtKB-SubCell"/>
</dbReference>
<dbReference type="GO" id="GO:0000786">
    <property type="term" value="C:nucleosome"/>
    <property type="evidence" value="ECO:0007669"/>
    <property type="project" value="InterPro"/>
</dbReference>
<dbReference type="GO" id="GO:0003677">
    <property type="term" value="F:DNA binding"/>
    <property type="evidence" value="ECO:0007669"/>
    <property type="project" value="InterPro"/>
</dbReference>
<dbReference type="GO" id="GO:0046982">
    <property type="term" value="F:protein heterodimerization activity"/>
    <property type="evidence" value="ECO:0007669"/>
    <property type="project" value="InterPro"/>
</dbReference>
<dbReference type="GO" id="GO:0030527">
    <property type="term" value="F:structural constituent of chromatin"/>
    <property type="evidence" value="ECO:0007669"/>
    <property type="project" value="InterPro"/>
</dbReference>
<dbReference type="CDD" id="cd22913">
    <property type="entry name" value="HFD_ABTB2-like"/>
    <property type="match status" value="1"/>
</dbReference>
<dbReference type="FunFam" id="1.25.40.20:FF:000045">
    <property type="entry name" value="Ankyrin repeat and BTB/POZ domain-containing protein 2"/>
    <property type="match status" value="1"/>
</dbReference>
<dbReference type="FunFam" id="3.30.710.10:FF:000030">
    <property type="entry name" value="Ankyrin repeat and BTB/POZ domain-containing protein BTBD11"/>
    <property type="match status" value="1"/>
</dbReference>
<dbReference type="Gene3D" id="1.25.40.20">
    <property type="entry name" value="Ankyrin repeat-containing domain"/>
    <property type="match status" value="1"/>
</dbReference>
<dbReference type="Gene3D" id="1.10.20.10">
    <property type="entry name" value="Histone, subunit A"/>
    <property type="match status" value="1"/>
</dbReference>
<dbReference type="Gene3D" id="3.30.710.10">
    <property type="entry name" value="Potassium Channel Kv1.1, Chain A"/>
    <property type="match status" value="1"/>
</dbReference>
<dbReference type="InterPro" id="IPR052089">
    <property type="entry name" value="Ankyrin-BTB/POZ_domain"/>
</dbReference>
<dbReference type="InterPro" id="IPR002110">
    <property type="entry name" value="Ankyrin_rpt"/>
</dbReference>
<dbReference type="InterPro" id="IPR036770">
    <property type="entry name" value="Ankyrin_rpt-contain_sf"/>
</dbReference>
<dbReference type="InterPro" id="IPR000210">
    <property type="entry name" value="BTB/POZ_dom"/>
</dbReference>
<dbReference type="InterPro" id="IPR009072">
    <property type="entry name" value="Histone-fold"/>
</dbReference>
<dbReference type="InterPro" id="IPR002119">
    <property type="entry name" value="Histone_H2A"/>
</dbReference>
<dbReference type="InterPro" id="IPR011333">
    <property type="entry name" value="SKP1/BTB/POZ_sf"/>
</dbReference>
<dbReference type="PANTHER" id="PTHR46071">
    <property type="entry name" value="ANKYRIN REPEAT AND BTB/POZ DOMAIN-CONTAINING"/>
    <property type="match status" value="1"/>
</dbReference>
<dbReference type="PANTHER" id="PTHR46071:SF4">
    <property type="entry name" value="ANKYRIN REPEAT AND BTB_POZ DOMAIN-CONTAINING PROTEIN 3-A-RELATED"/>
    <property type="match status" value="1"/>
</dbReference>
<dbReference type="Pfam" id="PF00023">
    <property type="entry name" value="Ank"/>
    <property type="match status" value="1"/>
</dbReference>
<dbReference type="Pfam" id="PF12796">
    <property type="entry name" value="Ank_2"/>
    <property type="match status" value="1"/>
</dbReference>
<dbReference type="Pfam" id="PF00651">
    <property type="entry name" value="BTB"/>
    <property type="match status" value="1"/>
</dbReference>
<dbReference type="PRINTS" id="PR00620">
    <property type="entry name" value="HISTONEH2A"/>
</dbReference>
<dbReference type="SMART" id="SM00248">
    <property type="entry name" value="ANK"/>
    <property type="match status" value="4"/>
</dbReference>
<dbReference type="SMART" id="SM00225">
    <property type="entry name" value="BTB"/>
    <property type="match status" value="1"/>
</dbReference>
<dbReference type="SUPFAM" id="SSF48403">
    <property type="entry name" value="Ankyrin repeat"/>
    <property type="match status" value="1"/>
</dbReference>
<dbReference type="SUPFAM" id="SSF47113">
    <property type="entry name" value="Histone-fold"/>
    <property type="match status" value="2"/>
</dbReference>
<dbReference type="SUPFAM" id="SSF54695">
    <property type="entry name" value="POZ domain"/>
    <property type="match status" value="1"/>
</dbReference>
<dbReference type="PROSITE" id="PS50297">
    <property type="entry name" value="ANK_REP_REGION"/>
    <property type="match status" value="1"/>
</dbReference>
<dbReference type="PROSITE" id="PS50088">
    <property type="entry name" value="ANK_REPEAT"/>
    <property type="match status" value="3"/>
</dbReference>
<dbReference type="PROSITE" id="PS50097">
    <property type="entry name" value="BTB"/>
    <property type="match status" value="1"/>
</dbReference>